<name>EXGB_ASPFC</name>
<accession>B0XRX9</accession>
<keyword id="KW-0119">Carbohydrate metabolism</keyword>
<keyword id="KW-0961">Cell wall biogenesis/degradation</keyword>
<keyword id="KW-0325">Glycoprotein</keyword>
<keyword id="KW-0326">Glycosidase</keyword>
<keyword id="KW-0378">Hydrolase</keyword>
<keyword id="KW-0624">Polysaccharide degradation</keyword>
<keyword id="KW-0964">Secreted</keyword>
<keyword id="KW-0732">Signal</keyword>
<gene>
    <name type="primary">exgB</name>
    <name type="ORF">AFUB_025210</name>
</gene>
<comment type="function">
    <text evidence="1">Beta-glucanases participate in the metabolism of beta-glucan, the main structural component of the cell wall. Acts on lutean, pustulan and 1,6-oligo-beta-D-glucosides (By similarity).</text>
</comment>
<comment type="catalytic activity">
    <reaction>
        <text>Random hydrolysis of (1-&gt;6)-linkages in (1-&gt;6)-beta-D-glucans.</text>
        <dbReference type="EC" id="3.2.1.75"/>
    </reaction>
</comment>
<comment type="subcellular location">
    <subcellularLocation>
        <location evidence="1">Secreted</location>
    </subcellularLocation>
</comment>
<comment type="similarity">
    <text evidence="3">Belongs to the glycosyl hydrolase 5 (cellulase A) family.</text>
</comment>
<organism>
    <name type="scientific">Aspergillus fumigatus (strain CBS 144.89 / FGSC A1163 / CEA10)</name>
    <name type="common">Neosartorya fumigata</name>
    <dbReference type="NCBI Taxonomy" id="451804"/>
    <lineage>
        <taxon>Eukaryota</taxon>
        <taxon>Fungi</taxon>
        <taxon>Dikarya</taxon>
        <taxon>Ascomycota</taxon>
        <taxon>Pezizomycotina</taxon>
        <taxon>Eurotiomycetes</taxon>
        <taxon>Eurotiomycetidae</taxon>
        <taxon>Eurotiales</taxon>
        <taxon>Aspergillaceae</taxon>
        <taxon>Aspergillus</taxon>
        <taxon>Aspergillus subgen. Fumigati</taxon>
    </lineage>
</organism>
<proteinExistence type="inferred from homology"/>
<dbReference type="EC" id="3.2.1.75"/>
<dbReference type="EMBL" id="DS499595">
    <property type="protein sequence ID" value="EDP54465.1"/>
    <property type="molecule type" value="Genomic_DNA"/>
</dbReference>
<dbReference type="SMR" id="B0XRX9"/>
<dbReference type="GlyCosmos" id="B0XRX9">
    <property type="glycosylation" value="2 sites, No reported glycans"/>
</dbReference>
<dbReference type="EnsemblFungi" id="EDP54465">
    <property type="protein sequence ID" value="EDP54465"/>
    <property type="gene ID" value="AFUB_025210"/>
</dbReference>
<dbReference type="VEuPathDB" id="FungiDB:AFUB_025210"/>
<dbReference type="HOGENOM" id="CLU_004624_7_0_1"/>
<dbReference type="OrthoDB" id="18369at5052"/>
<dbReference type="PhylomeDB" id="B0XRX9"/>
<dbReference type="Proteomes" id="UP000001699">
    <property type="component" value="Unassembled WGS sequence"/>
</dbReference>
<dbReference type="GO" id="GO:0009986">
    <property type="term" value="C:cell surface"/>
    <property type="evidence" value="ECO:0007669"/>
    <property type="project" value="TreeGrafter"/>
</dbReference>
<dbReference type="GO" id="GO:0005576">
    <property type="term" value="C:extracellular region"/>
    <property type="evidence" value="ECO:0007669"/>
    <property type="project" value="UniProtKB-SubCell"/>
</dbReference>
<dbReference type="GO" id="GO:0046557">
    <property type="term" value="F:glucan endo-1,6-beta-glucosidase activity"/>
    <property type="evidence" value="ECO:0007669"/>
    <property type="project" value="UniProtKB-EC"/>
</dbReference>
<dbReference type="GO" id="GO:0004338">
    <property type="term" value="F:glucan exo-1,3-beta-glucosidase activity"/>
    <property type="evidence" value="ECO:0007669"/>
    <property type="project" value="TreeGrafter"/>
</dbReference>
<dbReference type="GO" id="GO:0071555">
    <property type="term" value="P:cell wall organization"/>
    <property type="evidence" value="ECO:0007669"/>
    <property type="project" value="UniProtKB-KW"/>
</dbReference>
<dbReference type="GO" id="GO:0009251">
    <property type="term" value="P:glucan catabolic process"/>
    <property type="evidence" value="ECO:0007669"/>
    <property type="project" value="TreeGrafter"/>
</dbReference>
<dbReference type="FunFam" id="3.20.20.80:FF:000269">
    <property type="entry name" value="Probable glucan endo-1,6-beta-glucosidase B"/>
    <property type="match status" value="1"/>
</dbReference>
<dbReference type="Gene3D" id="3.20.20.80">
    <property type="entry name" value="Glycosidases"/>
    <property type="match status" value="1"/>
</dbReference>
<dbReference type="InterPro" id="IPR001547">
    <property type="entry name" value="Glyco_hydro_5"/>
</dbReference>
<dbReference type="InterPro" id="IPR017853">
    <property type="entry name" value="Glycoside_hydrolase_SF"/>
</dbReference>
<dbReference type="InterPro" id="IPR050386">
    <property type="entry name" value="Glycosyl_hydrolase_5"/>
</dbReference>
<dbReference type="PANTHER" id="PTHR31297">
    <property type="entry name" value="GLUCAN ENDO-1,6-BETA-GLUCOSIDASE B"/>
    <property type="match status" value="1"/>
</dbReference>
<dbReference type="PANTHER" id="PTHR31297:SF39">
    <property type="entry name" value="GLUCAN ENDO-1,6-BETA-GLUCOSIDASE B"/>
    <property type="match status" value="1"/>
</dbReference>
<dbReference type="Pfam" id="PF00150">
    <property type="entry name" value="Cellulase"/>
    <property type="match status" value="1"/>
</dbReference>
<dbReference type="SUPFAM" id="SSF51445">
    <property type="entry name" value="(Trans)glycosidases"/>
    <property type="match status" value="1"/>
</dbReference>
<evidence type="ECO:0000250" key="1"/>
<evidence type="ECO:0000255" key="2"/>
<evidence type="ECO:0000305" key="3"/>
<sequence length="396" mass="44894">MIRRLAAFSALSGLATAWLPEVNKKITSTNGTNLFTSSNGKIRGVNLGSQFVFEPWIAEKAWSDMGCGGQKSEFDCVSRLGQANANSAFASHWGSWITQDDIAEMVSYGLNTIRVPVGYWMREDLVYSDSEHFPQGGLQYLENLCEWASDAGLYIIIDLHGAPGAQTPQNPFTGQYAPIAGFYQDYQFERALKFLEWMTTNIHQNDKFRNVGMLEVVNEPVQDAGKVGSMRSSYYPNAFKRIRAAEQSLNIDRNNYLHIQMMDRLWGSGDPNESLTDTYYAAYDDHRYLKWASVAVSKDSYISTSCSDQLNSNTPTIVGEWSLSVPDNVQWNSDWSPDSNKDFYKKWFAAQVTAYERQQGWIFWTWKAQLGDYRWSYQGGLLLTRPGIGDQQVLTL</sequence>
<protein>
    <recommendedName>
        <fullName>Probable glucan endo-1,6-beta-glucosidase B</fullName>
        <ecNumber>3.2.1.75</ecNumber>
    </recommendedName>
    <alternativeName>
        <fullName>Beta-1,6-glucanase B</fullName>
    </alternativeName>
    <alternativeName>
        <fullName>Endo-1,6-beta-D-glucanase B</fullName>
    </alternativeName>
    <alternativeName>
        <fullName>Endo-1,6-beta-glucanase B</fullName>
    </alternativeName>
</protein>
<feature type="signal peptide" evidence="2">
    <location>
        <begin position="1"/>
        <end position="17"/>
    </location>
</feature>
<feature type="chain" id="PRO_0000394705" description="Probable glucan endo-1,6-beta-glucosidase B">
    <location>
        <begin position="18"/>
        <end position="396"/>
    </location>
</feature>
<feature type="active site" description="Proton donor" evidence="1">
    <location>
        <position position="219"/>
    </location>
</feature>
<feature type="active site" description="Nucleophile" evidence="1">
    <location>
        <position position="320"/>
    </location>
</feature>
<feature type="glycosylation site" description="N-linked (GlcNAc...) asparagine" evidence="2">
    <location>
        <position position="30"/>
    </location>
</feature>
<feature type="glycosylation site" description="N-linked (GlcNAc...) asparagine" evidence="2">
    <location>
        <position position="272"/>
    </location>
</feature>
<reference key="1">
    <citation type="journal article" date="2008" name="PLoS Genet.">
        <title>Genomic islands in the pathogenic filamentous fungus Aspergillus fumigatus.</title>
        <authorList>
            <person name="Fedorova N.D."/>
            <person name="Khaldi N."/>
            <person name="Joardar V.S."/>
            <person name="Maiti R."/>
            <person name="Amedeo P."/>
            <person name="Anderson M.J."/>
            <person name="Crabtree J."/>
            <person name="Silva J.C."/>
            <person name="Badger J.H."/>
            <person name="Albarraq A."/>
            <person name="Angiuoli S."/>
            <person name="Bussey H."/>
            <person name="Bowyer P."/>
            <person name="Cotty P.J."/>
            <person name="Dyer P.S."/>
            <person name="Egan A."/>
            <person name="Galens K."/>
            <person name="Fraser-Liggett C.M."/>
            <person name="Haas B.J."/>
            <person name="Inman J.M."/>
            <person name="Kent R."/>
            <person name="Lemieux S."/>
            <person name="Malavazi I."/>
            <person name="Orvis J."/>
            <person name="Roemer T."/>
            <person name="Ronning C.M."/>
            <person name="Sundaram J.P."/>
            <person name="Sutton G."/>
            <person name="Turner G."/>
            <person name="Venter J.C."/>
            <person name="White O.R."/>
            <person name="Whitty B.R."/>
            <person name="Youngman P."/>
            <person name="Wolfe K.H."/>
            <person name="Goldman G.H."/>
            <person name="Wortman J.R."/>
            <person name="Jiang B."/>
            <person name="Denning D.W."/>
            <person name="Nierman W.C."/>
        </authorList>
    </citation>
    <scope>NUCLEOTIDE SEQUENCE [LARGE SCALE GENOMIC DNA]</scope>
    <source>
        <strain>CBS 144.89 / FGSC A1163 / CEA10</strain>
    </source>
</reference>